<reference key="1">
    <citation type="submission" date="2008-07" db="EMBL/GenBank/DDBJ databases">
        <title>Complete sequence of Geobacter bemidjiensis BEM.</title>
        <authorList>
            <consortium name="US DOE Joint Genome Institute"/>
            <person name="Lucas S."/>
            <person name="Copeland A."/>
            <person name="Lapidus A."/>
            <person name="Glavina del Rio T."/>
            <person name="Dalin E."/>
            <person name="Tice H."/>
            <person name="Bruce D."/>
            <person name="Goodwin L."/>
            <person name="Pitluck S."/>
            <person name="Kiss H."/>
            <person name="Brettin T."/>
            <person name="Detter J.C."/>
            <person name="Han C."/>
            <person name="Kuske C.R."/>
            <person name="Schmutz J."/>
            <person name="Larimer F."/>
            <person name="Land M."/>
            <person name="Hauser L."/>
            <person name="Kyrpides N."/>
            <person name="Lykidis A."/>
            <person name="Lovley D."/>
            <person name="Richardson P."/>
        </authorList>
    </citation>
    <scope>NUCLEOTIDE SEQUENCE [LARGE SCALE GENOMIC DNA]</scope>
    <source>
        <strain>ATCC BAA-1014 / DSM 16622 / JCM 12645 / Bem</strain>
    </source>
</reference>
<proteinExistence type="inferred from homology"/>
<evidence type="ECO:0000255" key="1">
    <source>
        <dbReference type="HAMAP-Rule" id="MF_00158"/>
    </source>
</evidence>
<sequence>MIVIHSVAQMQQYARDKRGEIALVPTMGYLHEGHASLMVEARKRAKYVVASIFVNPTQFGVNEDLDSYPRDLEHDKEIAAKAGVDVIFAPIAAEMYPEGYQSYLNVEEISAHLCGASRPGHFRGVTTVVAKLFNIVAPKVALFGKKDFQQLAVLRRMVQDFNFDLEIVGMPIVREADGLAMSSRNTKLSPVEREKALCLSRSIAAAKAAFRGGERSVAALQKVAAAVIEGEKSPQIDYLEFRDQDSLLPLDKADERTLLALAVRVGSVRLIDNSILGED</sequence>
<comment type="function">
    <text evidence="1">Catalyzes the condensation of pantoate with beta-alanine in an ATP-dependent reaction via a pantoyl-adenylate intermediate.</text>
</comment>
<comment type="catalytic activity">
    <reaction evidence="1">
        <text>(R)-pantoate + beta-alanine + ATP = (R)-pantothenate + AMP + diphosphate + H(+)</text>
        <dbReference type="Rhea" id="RHEA:10912"/>
        <dbReference type="ChEBI" id="CHEBI:15378"/>
        <dbReference type="ChEBI" id="CHEBI:15980"/>
        <dbReference type="ChEBI" id="CHEBI:29032"/>
        <dbReference type="ChEBI" id="CHEBI:30616"/>
        <dbReference type="ChEBI" id="CHEBI:33019"/>
        <dbReference type="ChEBI" id="CHEBI:57966"/>
        <dbReference type="ChEBI" id="CHEBI:456215"/>
        <dbReference type="EC" id="6.3.2.1"/>
    </reaction>
</comment>
<comment type="pathway">
    <text evidence="1">Cofactor biosynthesis; (R)-pantothenate biosynthesis; (R)-pantothenate from (R)-pantoate and beta-alanine: step 1/1.</text>
</comment>
<comment type="subunit">
    <text evidence="1">Homodimer.</text>
</comment>
<comment type="subcellular location">
    <subcellularLocation>
        <location evidence="1">Cytoplasm</location>
    </subcellularLocation>
</comment>
<comment type="miscellaneous">
    <text evidence="1">The reaction proceeds by a bi uni uni bi ping pong mechanism.</text>
</comment>
<comment type="similarity">
    <text evidence="1">Belongs to the pantothenate synthetase family.</text>
</comment>
<protein>
    <recommendedName>
        <fullName evidence="1">Pantothenate synthetase</fullName>
        <shortName evidence="1">PS</shortName>
        <ecNumber evidence="1">6.3.2.1</ecNumber>
    </recommendedName>
    <alternativeName>
        <fullName evidence="1">Pantoate--beta-alanine ligase</fullName>
    </alternativeName>
    <alternativeName>
        <fullName evidence="1">Pantoate-activating enzyme</fullName>
    </alternativeName>
</protein>
<name>PANC_CITBB</name>
<organism>
    <name type="scientific">Citrifermentans bemidjiense (strain ATCC BAA-1014 / DSM 16622 / JCM 12645 / Bem)</name>
    <name type="common">Geobacter bemidjiensis</name>
    <dbReference type="NCBI Taxonomy" id="404380"/>
    <lineage>
        <taxon>Bacteria</taxon>
        <taxon>Pseudomonadati</taxon>
        <taxon>Thermodesulfobacteriota</taxon>
        <taxon>Desulfuromonadia</taxon>
        <taxon>Geobacterales</taxon>
        <taxon>Geobacteraceae</taxon>
        <taxon>Citrifermentans</taxon>
    </lineage>
</organism>
<gene>
    <name evidence="1" type="primary">panC</name>
    <name type="ordered locus">Gbem_3011</name>
</gene>
<feature type="chain" id="PRO_1000097069" description="Pantothenate synthetase">
    <location>
        <begin position="1"/>
        <end position="279"/>
    </location>
</feature>
<feature type="active site" description="Proton donor" evidence="1">
    <location>
        <position position="34"/>
    </location>
</feature>
<feature type="binding site" evidence="1">
    <location>
        <begin position="27"/>
        <end position="34"/>
    </location>
    <ligand>
        <name>ATP</name>
        <dbReference type="ChEBI" id="CHEBI:30616"/>
    </ligand>
</feature>
<feature type="binding site" evidence="1">
    <location>
        <position position="58"/>
    </location>
    <ligand>
        <name>(R)-pantoate</name>
        <dbReference type="ChEBI" id="CHEBI:15980"/>
    </ligand>
</feature>
<feature type="binding site" evidence="1">
    <location>
        <position position="58"/>
    </location>
    <ligand>
        <name>beta-alanine</name>
        <dbReference type="ChEBI" id="CHEBI:57966"/>
    </ligand>
</feature>
<feature type="binding site" evidence="1">
    <location>
        <begin position="144"/>
        <end position="147"/>
    </location>
    <ligand>
        <name>ATP</name>
        <dbReference type="ChEBI" id="CHEBI:30616"/>
    </ligand>
</feature>
<feature type="binding site" evidence="1">
    <location>
        <position position="150"/>
    </location>
    <ligand>
        <name>(R)-pantoate</name>
        <dbReference type="ChEBI" id="CHEBI:15980"/>
    </ligand>
</feature>
<feature type="binding site" evidence="1">
    <location>
        <position position="173"/>
    </location>
    <ligand>
        <name>ATP</name>
        <dbReference type="ChEBI" id="CHEBI:30616"/>
    </ligand>
</feature>
<feature type="binding site" evidence="1">
    <location>
        <begin position="181"/>
        <end position="184"/>
    </location>
    <ligand>
        <name>ATP</name>
        <dbReference type="ChEBI" id="CHEBI:30616"/>
    </ligand>
</feature>
<keyword id="KW-0067">ATP-binding</keyword>
<keyword id="KW-0963">Cytoplasm</keyword>
<keyword id="KW-0436">Ligase</keyword>
<keyword id="KW-0547">Nucleotide-binding</keyword>
<keyword id="KW-0566">Pantothenate biosynthesis</keyword>
<keyword id="KW-1185">Reference proteome</keyword>
<accession>B5E845</accession>
<dbReference type="EC" id="6.3.2.1" evidence="1"/>
<dbReference type="EMBL" id="CP001124">
    <property type="protein sequence ID" value="ACH40014.1"/>
    <property type="molecule type" value="Genomic_DNA"/>
</dbReference>
<dbReference type="RefSeq" id="WP_012531444.1">
    <property type="nucleotide sequence ID" value="NC_011146.1"/>
</dbReference>
<dbReference type="SMR" id="B5E845"/>
<dbReference type="STRING" id="404380.Gbem_3011"/>
<dbReference type="KEGG" id="gbm:Gbem_3011"/>
<dbReference type="eggNOG" id="COG0414">
    <property type="taxonomic scope" value="Bacteria"/>
</dbReference>
<dbReference type="HOGENOM" id="CLU_047148_0_0_7"/>
<dbReference type="OrthoDB" id="9773087at2"/>
<dbReference type="UniPathway" id="UPA00028">
    <property type="reaction ID" value="UER00005"/>
</dbReference>
<dbReference type="Proteomes" id="UP000008825">
    <property type="component" value="Chromosome"/>
</dbReference>
<dbReference type="GO" id="GO:0005829">
    <property type="term" value="C:cytosol"/>
    <property type="evidence" value="ECO:0007669"/>
    <property type="project" value="TreeGrafter"/>
</dbReference>
<dbReference type="GO" id="GO:0005524">
    <property type="term" value="F:ATP binding"/>
    <property type="evidence" value="ECO:0007669"/>
    <property type="project" value="UniProtKB-KW"/>
</dbReference>
<dbReference type="GO" id="GO:0004592">
    <property type="term" value="F:pantoate-beta-alanine ligase activity"/>
    <property type="evidence" value="ECO:0007669"/>
    <property type="project" value="UniProtKB-UniRule"/>
</dbReference>
<dbReference type="GO" id="GO:0015940">
    <property type="term" value="P:pantothenate biosynthetic process"/>
    <property type="evidence" value="ECO:0007669"/>
    <property type="project" value="UniProtKB-UniRule"/>
</dbReference>
<dbReference type="CDD" id="cd00560">
    <property type="entry name" value="PanC"/>
    <property type="match status" value="1"/>
</dbReference>
<dbReference type="FunFam" id="3.40.50.620:FF:000013">
    <property type="entry name" value="Pantothenate synthetase"/>
    <property type="match status" value="1"/>
</dbReference>
<dbReference type="Gene3D" id="3.40.50.620">
    <property type="entry name" value="HUPs"/>
    <property type="match status" value="1"/>
</dbReference>
<dbReference type="Gene3D" id="3.30.1300.10">
    <property type="entry name" value="Pantoate-beta-alanine ligase, C-terminal domain"/>
    <property type="match status" value="1"/>
</dbReference>
<dbReference type="HAMAP" id="MF_00158">
    <property type="entry name" value="PanC"/>
    <property type="match status" value="1"/>
</dbReference>
<dbReference type="InterPro" id="IPR003721">
    <property type="entry name" value="Pantoate_ligase"/>
</dbReference>
<dbReference type="InterPro" id="IPR042176">
    <property type="entry name" value="Pantoate_ligase_C"/>
</dbReference>
<dbReference type="InterPro" id="IPR014729">
    <property type="entry name" value="Rossmann-like_a/b/a_fold"/>
</dbReference>
<dbReference type="NCBIfam" id="TIGR00018">
    <property type="entry name" value="panC"/>
    <property type="match status" value="1"/>
</dbReference>
<dbReference type="PANTHER" id="PTHR21299">
    <property type="entry name" value="CYTIDYLATE KINASE/PANTOATE-BETA-ALANINE LIGASE"/>
    <property type="match status" value="1"/>
</dbReference>
<dbReference type="PANTHER" id="PTHR21299:SF1">
    <property type="entry name" value="PANTOATE--BETA-ALANINE LIGASE"/>
    <property type="match status" value="1"/>
</dbReference>
<dbReference type="Pfam" id="PF02569">
    <property type="entry name" value="Pantoate_ligase"/>
    <property type="match status" value="1"/>
</dbReference>
<dbReference type="SUPFAM" id="SSF52374">
    <property type="entry name" value="Nucleotidylyl transferase"/>
    <property type="match status" value="1"/>
</dbReference>